<dbReference type="EC" id="6.1.1.19" evidence="1"/>
<dbReference type="EMBL" id="CP000237">
    <property type="protein sequence ID" value="ABD45830.1"/>
    <property type="molecule type" value="Genomic_DNA"/>
</dbReference>
<dbReference type="RefSeq" id="WP_011451456.1">
    <property type="nucleotide sequence ID" value="NC_007798.1"/>
</dbReference>
<dbReference type="SMR" id="Q2GEZ6"/>
<dbReference type="STRING" id="222891.NSE_0049"/>
<dbReference type="KEGG" id="nse:NSE_0049"/>
<dbReference type="eggNOG" id="COG0018">
    <property type="taxonomic scope" value="Bacteria"/>
</dbReference>
<dbReference type="HOGENOM" id="CLU_006406_0_1_5"/>
<dbReference type="OrthoDB" id="9803211at2"/>
<dbReference type="Proteomes" id="UP000001942">
    <property type="component" value="Chromosome"/>
</dbReference>
<dbReference type="GO" id="GO:0005737">
    <property type="term" value="C:cytoplasm"/>
    <property type="evidence" value="ECO:0007669"/>
    <property type="project" value="UniProtKB-SubCell"/>
</dbReference>
<dbReference type="GO" id="GO:0004814">
    <property type="term" value="F:arginine-tRNA ligase activity"/>
    <property type="evidence" value="ECO:0007669"/>
    <property type="project" value="UniProtKB-UniRule"/>
</dbReference>
<dbReference type="GO" id="GO:0005524">
    <property type="term" value="F:ATP binding"/>
    <property type="evidence" value="ECO:0007669"/>
    <property type="project" value="UniProtKB-UniRule"/>
</dbReference>
<dbReference type="GO" id="GO:0006420">
    <property type="term" value="P:arginyl-tRNA aminoacylation"/>
    <property type="evidence" value="ECO:0007669"/>
    <property type="project" value="UniProtKB-UniRule"/>
</dbReference>
<dbReference type="Gene3D" id="3.30.1360.70">
    <property type="entry name" value="Arginyl tRNA synthetase N-terminal domain"/>
    <property type="match status" value="1"/>
</dbReference>
<dbReference type="Gene3D" id="3.40.50.620">
    <property type="entry name" value="HUPs"/>
    <property type="match status" value="1"/>
</dbReference>
<dbReference type="Gene3D" id="1.10.730.10">
    <property type="entry name" value="Isoleucyl-tRNA Synthetase, Domain 1"/>
    <property type="match status" value="1"/>
</dbReference>
<dbReference type="HAMAP" id="MF_00123">
    <property type="entry name" value="Arg_tRNA_synth"/>
    <property type="match status" value="1"/>
</dbReference>
<dbReference type="InterPro" id="IPR001412">
    <property type="entry name" value="aa-tRNA-synth_I_CS"/>
</dbReference>
<dbReference type="InterPro" id="IPR001278">
    <property type="entry name" value="Arg-tRNA-ligase"/>
</dbReference>
<dbReference type="InterPro" id="IPR005148">
    <property type="entry name" value="Arg-tRNA-synth_N"/>
</dbReference>
<dbReference type="InterPro" id="IPR036695">
    <property type="entry name" value="Arg-tRNA-synth_N_sf"/>
</dbReference>
<dbReference type="InterPro" id="IPR035684">
    <property type="entry name" value="ArgRS_core"/>
</dbReference>
<dbReference type="InterPro" id="IPR008909">
    <property type="entry name" value="DALR_anticod-bd"/>
</dbReference>
<dbReference type="InterPro" id="IPR014729">
    <property type="entry name" value="Rossmann-like_a/b/a_fold"/>
</dbReference>
<dbReference type="InterPro" id="IPR009080">
    <property type="entry name" value="tRNAsynth_Ia_anticodon-bd"/>
</dbReference>
<dbReference type="NCBIfam" id="TIGR00456">
    <property type="entry name" value="argS"/>
    <property type="match status" value="1"/>
</dbReference>
<dbReference type="PANTHER" id="PTHR11956:SF5">
    <property type="entry name" value="ARGININE--TRNA LIGASE, CYTOPLASMIC"/>
    <property type="match status" value="1"/>
</dbReference>
<dbReference type="PANTHER" id="PTHR11956">
    <property type="entry name" value="ARGINYL-TRNA SYNTHETASE"/>
    <property type="match status" value="1"/>
</dbReference>
<dbReference type="Pfam" id="PF03485">
    <property type="entry name" value="Arg_tRNA_synt_N"/>
    <property type="match status" value="1"/>
</dbReference>
<dbReference type="Pfam" id="PF05746">
    <property type="entry name" value="DALR_1"/>
    <property type="match status" value="1"/>
</dbReference>
<dbReference type="Pfam" id="PF00750">
    <property type="entry name" value="tRNA-synt_1d"/>
    <property type="match status" value="1"/>
</dbReference>
<dbReference type="PRINTS" id="PR01038">
    <property type="entry name" value="TRNASYNTHARG"/>
</dbReference>
<dbReference type="SMART" id="SM01016">
    <property type="entry name" value="Arg_tRNA_synt_N"/>
    <property type="match status" value="1"/>
</dbReference>
<dbReference type="SMART" id="SM00836">
    <property type="entry name" value="DALR_1"/>
    <property type="match status" value="1"/>
</dbReference>
<dbReference type="SUPFAM" id="SSF47323">
    <property type="entry name" value="Anticodon-binding domain of a subclass of class I aminoacyl-tRNA synthetases"/>
    <property type="match status" value="1"/>
</dbReference>
<dbReference type="SUPFAM" id="SSF55190">
    <property type="entry name" value="Arginyl-tRNA synthetase (ArgRS), N-terminal 'additional' domain"/>
    <property type="match status" value="1"/>
</dbReference>
<dbReference type="SUPFAM" id="SSF52374">
    <property type="entry name" value="Nucleotidylyl transferase"/>
    <property type="match status" value="1"/>
</dbReference>
<dbReference type="PROSITE" id="PS00178">
    <property type="entry name" value="AA_TRNA_LIGASE_I"/>
    <property type="match status" value="1"/>
</dbReference>
<protein>
    <recommendedName>
        <fullName evidence="1">Arginine--tRNA ligase</fullName>
        <ecNumber evidence="1">6.1.1.19</ecNumber>
    </recommendedName>
    <alternativeName>
        <fullName evidence="1">Arginyl-tRNA synthetase</fullName>
        <shortName evidence="1">ArgRS</shortName>
    </alternativeName>
</protein>
<sequence>MDLFLRLGNVLTEVVTSIFGVTLSEQVLLWNSPKKREYGDFSTAISFLIAKEVRLSLHEVACSIADGLRSFKDLFKNVSVASGGFINVFLTSDTWSEFLAAVSDDAGGYGFSDIGHAVPLNLEFVSANPTGPLHLGHIRGAVLFDIFAELLDKFGFSLTREYYINDAGKQIDLLVYSVFVRFCEQLRKKESDNFPSNCYAGDYIRDIASYLISTFPDSVKDTTELKSFSDTFREVILSLTMDMIKSDLAKLGISYDCYVREKELHEGNYIEKVIAVLDEKGYLDEEELPSPKGKSGDWVERRQKVFLSTKFGDDTNRALQKVDGSWTYFASDVAYHYHKLERGFNHMIVGLGADHAGYVKRLSGVVEALSGGDARIDIKLYNLVNLFRNGKPVKLSKRNGDLITLDDVLESGITVSEIRFAMLTKSSEIVLDFDLDKFVRASYDNPLFYVQYAHARCSSLLRKRGPSAKCDAAMLVEKQELDLMVTLAKLPSLLKVIVVSGEVHKLTFYLHEVAERFHALWNAGMIENKFRFIIEDEPELTNARLILVKAVKNTLASVLKVMKIEPAERM</sequence>
<reference key="1">
    <citation type="journal article" date="2006" name="PLoS Genet.">
        <title>Comparative genomics of emerging human ehrlichiosis agents.</title>
        <authorList>
            <person name="Dunning Hotopp J.C."/>
            <person name="Lin M."/>
            <person name="Madupu R."/>
            <person name="Crabtree J."/>
            <person name="Angiuoli S.V."/>
            <person name="Eisen J.A."/>
            <person name="Seshadri R."/>
            <person name="Ren Q."/>
            <person name="Wu M."/>
            <person name="Utterback T.R."/>
            <person name="Smith S."/>
            <person name="Lewis M."/>
            <person name="Khouri H."/>
            <person name="Zhang C."/>
            <person name="Niu H."/>
            <person name="Lin Q."/>
            <person name="Ohashi N."/>
            <person name="Zhi N."/>
            <person name="Nelson W.C."/>
            <person name="Brinkac L.M."/>
            <person name="Dodson R.J."/>
            <person name="Rosovitz M.J."/>
            <person name="Sundaram J.P."/>
            <person name="Daugherty S.C."/>
            <person name="Davidsen T."/>
            <person name="Durkin A.S."/>
            <person name="Gwinn M.L."/>
            <person name="Haft D.H."/>
            <person name="Selengut J.D."/>
            <person name="Sullivan S.A."/>
            <person name="Zafar N."/>
            <person name="Zhou L."/>
            <person name="Benahmed F."/>
            <person name="Forberger H."/>
            <person name="Halpin R."/>
            <person name="Mulligan S."/>
            <person name="Robinson J."/>
            <person name="White O."/>
            <person name="Rikihisa Y."/>
            <person name="Tettelin H."/>
        </authorList>
    </citation>
    <scope>NUCLEOTIDE SEQUENCE [LARGE SCALE GENOMIC DNA]</scope>
    <source>
        <strain>ATCC VR-367 / Miyayama</strain>
    </source>
</reference>
<organism>
    <name type="scientific">Neorickettsia sennetsu (strain ATCC VR-367 / Miyayama)</name>
    <name type="common">Ehrlichia sennetsu</name>
    <dbReference type="NCBI Taxonomy" id="222891"/>
    <lineage>
        <taxon>Bacteria</taxon>
        <taxon>Pseudomonadati</taxon>
        <taxon>Pseudomonadota</taxon>
        <taxon>Alphaproteobacteria</taxon>
        <taxon>Rickettsiales</taxon>
        <taxon>Anaplasmataceae</taxon>
        <taxon>Neorickettsia</taxon>
    </lineage>
</organism>
<name>SYR_NEOSM</name>
<comment type="catalytic activity">
    <reaction evidence="1">
        <text>tRNA(Arg) + L-arginine + ATP = L-arginyl-tRNA(Arg) + AMP + diphosphate</text>
        <dbReference type="Rhea" id="RHEA:20301"/>
        <dbReference type="Rhea" id="RHEA-COMP:9658"/>
        <dbReference type="Rhea" id="RHEA-COMP:9673"/>
        <dbReference type="ChEBI" id="CHEBI:30616"/>
        <dbReference type="ChEBI" id="CHEBI:32682"/>
        <dbReference type="ChEBI" id="CHEBI:33019"/>
        <dbReference type="ChEBI" id="CHEBI:78442"/>
        <dbReference type="ChEBI" id="CHEBI:78513"/>
        <dbReference type="ChEBI" id="CHEBI:456215"/>
        <dbReference type="EC" id="6.1.1.19"/>
    </reaction>
</comment>
<comment type="subunit">
    <text evidence="1">Monomer.</text>
</comment>
<comment type="subcellular location">
    <subcellularLocation>
        <location evidence="1">Cytoplasm</location>
    </subcellularLocation>
</comment>
<comment type="similarity">
    <text evidence="1">Belongs to the class-I aminoacyl-tRNA synthetase family.</text>
</comment>
<gene>
    <name evidence="1" type="primary">argS</name>
    <name type="ordered locus">NSE_0049</name>
</gene>
<feature type="chain" id="PRO_0000242054" description="Arginine--tRNA ligase">
    <location>
        <begin position="1"/>
        <end position="570"/>
    </location>
</feature>
<feature type="short sequence motif" description="'HIGH' region">
    <location>
        <begin position="127"/>
        <end position="137"/>
    </location>
</feature>
<keyword id="KW-0030">Aminoacyl-tRNA synthetase</keyword>
<keyword id="KW-0067">ATP-binding</keyword>
<keyword id="KW-0963">Cytoplasm</keyword>
<keyword id="KW-0436">Ligase</keyword>
<keyword id="KW-0547">Nucleotide-binding</keyword>
<keyword id="KW-0648">Protein biosynthesis</keyword>
<proteinExistence type="inferred from homology"/>
<evidence type="ECO:0000255" key="1">
    <source>
        <dbReference type="HAMAP-Rule" id="MF_00123"/>
    </source>
</evidence>
<accession>Q2GEZ6</accession>